<gene>
    <name evidence="1" type="primary">rplX</name>
    <name type="ordered locus">Bcen_2748</name>
</gene>
<organism>
    <name type="scientific">Burkholderia orbicola (strain AU 1054)</name>
    <dbReference type="NCBI Taxonomy" id="331271"/>
    <lineage>
        <taxon>Bacteria</taxon>
        <taxon>Pseudomonadati</taxon>
        <taxon>Pseudomonadota</taxon>
        <taxon>Betaproteobacteria</taxon>
        <taxon>Burkholderiales</taxon>
        <taxon>Burkholderiaceae</taxon>
        <taxon>Burkholderia</taxon>
        <taxon>Burkholderia cepacia complex</taxon>
        <taxon>Burkholderia orbicola</taxon>
    </lineage>
</organism>
<proteinExistence type="inferred from homology"/>
<feature type="chain" id="PRO_1000052189" description="Large ribosomal subunit protein uL24">
    <location>
        <begin position="1"/>
        <end position="102"/>
    </location>
</feature>
<dbReference type="EMBL" id="CP000378">
    <property type="protein sequence ID" value="ABF77646.1"/>
    <property type="molecule type" value="Genomic_DNA"/>
</dbReference>
<dbReference type="SMR" id="Q1BRV9"/>
<dbReference type="HOGENOM" id="CLU_093315_2_2_4"/>
<dbReference type="GO" id="GO:1990904">
    <property type="term" value="C:ribonucleoprotein complex"/>
    <property type="evidence" value="ECO:0007669"/>
    <property type="project" value="UniProtKB-KW"/>
</dbReference>
<dbReference type="GO" id="GO:0005840">
    <property type="term" value="C:ribosome"/>
    <property type="evidence" value="ECO:0007669"/>
    <property type="project" value="UniProtKB-KW"/>
</dbReference>
<dbReference type="GO" id="GO:0019843">
    <property type="term" value="F:rRNA binding"/>
    <property type="evidence" value="ECO:0007669"/>
    <property type="project" value="UniProtKB-UniRule"/>
</dbReference>
<dbReference type="GO" id="GO:0003735">
    <property type="term" value="F:structural constituent of ribosome"/>
    <property type="evidence" value="ECO:0007669"/>
    <property type="project" value="InterPro"/>
</dbReference>
<dbReference type="GO" id="GO:0006412">
    <property type="term" value="P:translation"/>
    <property type="evidence" value="ECO:0007669"/>
    <property type="project" value="UniProtKB-UniRule"/>
</dbReference>
<dbReference type="CDD" id="cd06089">
    <property type="entry name" value="KOW_RPL26"/>
    <property type="match status" value="1"/>
</dbReference>
<dbReference type="Gene3D" id="2.30.30.30">
    <property type="match status" value="1"/>
</dbReference>
<dbReference type="HAMAP" id="MF_01326_B">
    <property type="entry name" value="Ribosomal_uL24_B"/>
    <property type="match status" value="1"/>
</dbReference>
<dbReference type="InterPro" id="IPR014722">
    <property type="entry name" value="Rib_uL2_dom2"/>
</dbReference>
<dbReference type="InterPro" id="IPR003256">
    <property type="entry name" value="Ribosomal_uL24"/>
</dbReference>
<dbReference type="InterPro" id="IPR005825">
    <property type="entry name" value="Ribosomal_uL24_CS"/>
</dbReference>
<dbReference type="InterPro" id="IPR041988">
    <property type="entry name" value="Ribosomal_uL24_KOW"/>
</dbReference>
<dbReference type="InterPro" id="IPR008991">
    <property type="entry name" value="Translation_prot_SH3-like_sf"/>
</dbReference>
<dbReference type="NCBIfam" id="TIGR01079">
    <property type="entry name" value="rplX_bact"/>
    <property type="match status" value="1"/>
</dbReference>
<dbReference type="PANTHER" id="PTHR12903">
    <property type="entry name" value="MITOCHONDRIAL RIBOSOMAL PROTEIN L24"/>
    <property type="match status" value="1"/>
</dbReference>
<dbReference type="Pfam" id="PF17136">
    <property type="entry name" value="ribosomal_L24"/>
    <property type="match status" value="1"/>
</dbReference>
<dbReference type="SUPFAM" id="SSF50104">
    <property type="entry name" value="Translation proteins SH3-like domain"/>
    <property type="match status" value="1"/>
</dbReference>
<dbReference type="PROSITE" id="PS01108">
    <property type="entry name" value="RIBOSOMAL_L24"/>
    <property type="match status" value="1"/>
</dbReference>
<accession>Q1BRV9</accession>
<sequence length="102" mass="10709">MNKIRKGDEVIVVTGKDKGKRGVVLAVGAEHVTVEGINLVKKHVKPNPMKGTTGGVEAKTMPLHISNVALVDANGKASRVGIKVEEGKKVRFLKTTGAVLSA</sequence>
<keyword id="KW-0687">Ribonucleoprotein</keyword>
<keyword id="KW-0689">Ribosomal protein</keyword>
<keyword id="KW-0694">RNA-binding</keyword>
<keyword id="KW-0699">rRNA-binding</keyword>
<name>RL24_BURO1</name>
<reference key="1">
    <citation type="submission" date="2006-05" db="EMBL/GenBank/DDBJ databases">
        <title>Complete sequence of chromosome 1 of Burkholderia cenocepacia AU 1054.</title>
        <authorList>
            <consortium name="US DOE Joint Genome Institute"/>
            <person name="Copeland A."/>
            <person name="Lucas S."/>
            <person name="Lapidus A."/>
            <person name="Barry K."/>
            <person name="Detter J.C."/>
            <person name="Glavina del Rio T."/>
            <person name="Hammon N."/>
            <person name="Israni S."/>
            <person name="Dalin E."/>
            <person name="Tice H."/>
            <person name="Pitluck S."/>
            <person name="Chain P."/>
            <person name="Malfatti S."/>
            <person name="Shin M."/>
            <person name="Vergez L."/>
            <person name="Schmutz J."/>
            <person name="Larimer F."/>
            <person name="Land M."/>
            <person name="Hauser L."/>
            <person name="Kyrpides N."/>
            <person name="Lykidis A."/>
            <person name="LiPuma J.J."/>
            <person name="Konstantinidis K."/>
            <person name="Tiedje J.M."/>
            <person name="Richardson P."/>
        </authorList>
    </citation>
    <scope>NUCLEOTIDE SEQUENCE [LARGE SCALE GENOMIC DNA]</scope>
    <source>
        <strain>AU 1054</strain>
    </source>
</reference>
<protein>
    <recommendedName>
        <fullName evidence="1">Large ribosomal subunit protein uL24</fullName>
    </recommendedName>
    <alternativeName>
        <fullName evidence="2">50S ribosomal protein L24</fullName>
    </alternativeName>
</protein>
<comment type="function">
    <text evidence="1">One of two assembly initiator proteins, it binds directly to the 5'-end of the 23S rRNA, where it nucleates assembly of the 50S subunit.</text>
</comment>
<comment type="function">
    <text evidence="1">One of the proteins that surrounds the polypeptide exit tunnel on the outside of the subunit.</text>
</comment>
<comment type="subunit">
    <text evidence="1">Part of the 50S ribosomal subunit.</text>
</comment>
<comment type="similarity">
    <text evidence="1">Belongs to the universal ribosomal protein uL24 family.</text>
</comment>
<evidence type="ECO:0000255" key="1">
    <source>
        <dbReference type="HAMAP-Rule" id="MF_01326"/>
    </source>
</evidence>
<evidence type="ECO:0000305" key="2"/>